<keyword id="KW-0002">3D-structure</keyword>
<keyword id="KW-0025">Alternative splicing</keyword>
<keyword id="KW-0175">Coiled coil</keyword>
<keyword id="KW-0287">Flowering</keyword>
<keyword id="KW-1184">Jasmonic acid signaling pathway</keyword>
<keyword id="KW-0539">Nucleus</keyword>
<keyword id="KW-1185">Reference proteome</keyword>
<keyword id="KW-0804">Transcription</keyword>
<keyword id="KW-0805">Transcription regulation</keyword>
<protein>
    <recommendedName>
        <fullName>Mediator of RNA polymerase II transcription subunit 25</fullName>
        <shortName>AtMED25</shortName>
    </recommendedName>
    <alternativeName>
        <fullName>Phytochrome and flowering time 1 protein</fullName>
    </alternativeName>
    <alternativeName>
        <fullName>Phytochrome and flowering time regulatory protein 1</fullName>
    </alternativeName>
</protein>
<name>MED25_ARATH</name>
<dbReference type="EMBL" id="AY170377">
    <property type="protein sequence ID" value="AAO39425.1"/>
    <property type="molecule type" value="mRNA"/>
</dbReference>
<dbReference type="EMBL" id="AC079281">
    <property type="protein sequence ID" value="AAG50810.1"/>
    <property type="status" value="ALT_SEQ"/>
    <property type="molecule type" value="Genomic_DNA"/>
</dbReference>
<dbReference type="EMBL" id="CP002684">
    <property type="protein sequence ID" value="AEE30639.1"/>
    <property type="molecule type" value="Genomic_DNA"/>
</dbReference>
<dbReference type="EMBL" id="CP002684">
    <property type="protein sequence ID" value="AEE30640.1"/>
    <property type="molecule type" value="Genomic_DNA"/>
</dbReference>
<dbReference type="PIR" id="G86385">
    <property type="entry name" value="G86385"/>
</dbReference>
<dbReference type="RefSeq" id="NP_001077596.1">
    <molecule id="Q7XYY2-2"/>
    <property type="nucleotide sequence ID" value="NM_001084127.1"/>
</dbReference>
<dbReference type="RefSeq" id="NP_173925.3">
    <molecule id="Q7XYY2-1"/>
    <property type="nucleotide sequence ID" value="NM_102365.5"/>
</dbReference>
<dbReference type="PDB" id="8Y4L">
    <property type="method" value="NMR"/>
    <property type="chains" value="A=552-681"/>
</dbReference>
<dbReference type="PDBsum" id="8Y4L"/>
<dbReference type="SMR" id="Q7XYY2"/>
<dbReference type="BioGRID" id="24378">
    <property type="interactions" value="27"/>
</dbReference>
<dbReference type="DIP" id="DIP-39923N"/>
<dbReference type="FunCoup" id="Q7XYY2">
    <property type="interactions" value="633"/>
</dbReference>
<dbReference type="IntAct" id="Q7XYY2">
    <property type="interactions" value="6"/>
</dbReference>
<dbReference type="MINT" id="Q7XYY2"/>
<dbReference type="STRING" id="3702.Q7XYY2"/>
<dbReference type="GlyGen" id="Q7XYY2">
    <property type="glycosylation" value="5 sites, 1 O-linked glycan (3 sites)"/>
</dbReference>
<dbReference type="iPTMnet" id="Q7XYY2"/>
<dbReference type="PaxDb" id="3702-AT1G25540.1"/>
<dbReference type="ProteomicsDB" id="250843">
    <molecule id="Q7XYY2-1"/>
</dbReference>
<dbReference type="EnsemblPlants" id="AT1G25540.1">
    <molecule id="Q7XYY2-1"/>
    <property type="protein sequence ID" value="AT1G25540.1"/>
    <property type="gene ID" value="AT1G25540"/>
</dbReference>
<dbReference type="EnsemblPlants" id="AT1G25540.2">
    <molecule id="Q7XYY2-2"/>
    <property type="protein sequence ID" value="AT1G25540.2"/>
    <property type="gene ID" value="AT1G25540"/>
</dbReference>
<dbReference type="GeneID" id="839141"/>
<dbReference type="Gramene" id="AT1G25540.1">
    <molecule id="Q7XYY2-1"/>
    <property type="protein sequence ID" value="AT1G25540.1"/>
    <property type="gene ID" value="AT1G25540"/>
</dbReference>
<dbReference type="Gramene" id="AT1G25540.2">
    <molecule id="Q7XYY2-2"/>
    <property type="protein sequence ID" value="AT1G25540.2"/>
    <property type="gene ID" value="AT1G25540"/>
</dbReference>
<dbReference type="KEGG" id="ath:AT1G25540"/>
<dbReference type="Araport" id="AT1G25540"/>
<dbReference type="TAIR" id="AT1G25540">
    <property type="gene designation" value="PFT1"/>
</dbReference>
<dbReference type="eggNOG" id="ENOG502QR8W">
    <property type="taxonomic scope" value="Eukaryota"/>
</dbReference>
<dbReference type="HOGENOM" id="CLU_010796_0_0_1"/>
<dbReference type="InParanoid" id="Q7XYY2"/>
<dbReference type="OMA" id="NQMHQQT"/>
<dbReference type="PhylomeDB" id="Q7XYY2"/>
<dbReference type="PRO" id="PR:Q7XYY2"/>
<dbReference type="Proteomes" id="UP000006548">
    <property type="component" value="Chromosome 1"/>
</dbReference>
<dbReference type="ExpressionAtlas" id="Q7XYY2">
    <property type="expression patterns" value="baseline and differential"/>
</dbReference>
<dbReference type="GO" id="GO:0016592">
    <property type="term" value="C:mediator complex"/>
    <property type="evidence" value="ECO:0000314"/>
    <property type="project" value="TAIR"/>
</dbReference>
<dbReference type="GO" id="GO:0005634">
    <property type="term" value="C:nucleus"/>
    <property type="evidence" value="ECO:0000314"/>
    <property type="project" value="TAIR"/>
</dbReference>
<dbReference type="GO" id="GO:0003677">
    <property type="term" value="F:DNA binding"/>
    <property type="evidence" value="ECO:0000314"/>
    <property type="project" value="UniProtKB"/>
</dbReference>
<dbReference type="GO" id="GO:0003713">
    <property type="term" value="F:transcription coactivator activity"/>
    <property type="evidence" value="ECO:0000303"/>
    <property type="project" value="TAIR"/>
</dbReference>
<dbReference type="GO" id="GO:0050832">
    <property type="term" value="P:defense response to fungus"/>
    <property type="evidence" value="ECO:0000315"/>
    <property type="project" value="TAIR"/>
</dbReference>
<dbReference type="GO" id="GO:0009908">
    <property type="term" value="P:flower development"/>
    <property type="evidence" value="ECO:0007669"/>
    <property type="project" value="UniProtKB-KW"/>
</dbReference>
<dbReference type="GO" id="GO:0009867">
    <property type="term" value="P:jasmonic acid mediated signaling pathway"/>
    <property type="evidence" value="ECO:0000315"/>
    <property type="project" value="TAIR"/>
</dbReference>
<dbReference type="GO" id="GO:0031349">
    <property type="term" value="P:positive regulation of defense response"/>
    <property type="evidence" value="ECO:0000315"/>
    <property type="project" value="TAIR"/>
</dbReference>
<dbReference type="GO" id="GO:0045893">
    <property type="term" value="P:positive regulation of DNA-templated transcription"/>
    <property type="evidence" value="ECO:0000315"/>
    <property type="project" value="TAIR"/>
</dbReference>
<dbReference type="GO" id="GO:0009911">
    <property type="term" value="P:positive regulation of flower development"/>
    <property type="evidence" value="ECO:0000315"/>
    <property type="project" value="TAIR"/>
</dbReference>
<dbReference type="GO" id="GO:0009585">
    <property type="term" value="P:red, far-red light phototransduction"/>
    <property type="evidence" value="ECO:0000315"/>
    <property type="project" value="TAIR"/>
</dbReference>
<dbReference type="GO" id="GO:0009909">
    <property type="term" value="P:regulation of flower development"/>
    <property type="evidence" value="ECO:0000315"/>
    <property type="project" value="TAIR"/>
</dbReference>
<dbReference type="GO" id="GO:0010218">
    <property type="term" value="P:response to far red light"/>
    <property type="evidence" value="ECO:0000315"/>
    <property type="project" value="TAIR"/>
</dbReference>
<dbReference type="GO" id="GO:0010114">
    <property type="term" value="P:response to red light"/>
    <property type="evidence" value="ECO:0000315"/>
    <property type="project" value="TAIR"/>
</dbReference>
<dbReference type="GO" id="GO:0010091">
    <property type="term" value="P:trichome branching"/>
    <property type="evidence" value="ECO:0000315"/>
    <property type="project" value="TAIR"/>
</dbReference>
<dbReference type="GO" id="GO:1905499">
    <property type="term" value="P:trichome papilla formation"/>
    <property type="evidence" value="ECO:0000315"/>
    <property type="project" value="TAIR"/>
</dbReference>
<dbReference type="InterPro" id="IPR021419">
    <property type="entry name" value="Mediator_Med25_VWA"/>
</dbReference>
<dbReference type="PANTHER" id="PTHR12433">
    <property type="entry name" value="MEDIATOR OF RNA POLYMERASE II TRANSCRIPTION SUBUNIT 25"/>
    <property type="match status" value="1"/>
</dbReference>
<dbReference type="PANTHER" id="PTHR12433:SF11">
    <property type="entry name" value="MEDIATOR OF RNA POLYMERASE II TRANSCRIPTION SUBUNIT 25"/>
    <property type="match status" value="1"/>
</dbReference>
<dbReference type="Pfam" id="PF11265">
    <property type="entry name" value="Med25_VWA"/>
    <property type="match status" value="1"/>
</dbReference>
<organism>
    <name type="scientific">Arabidopsis thaliana</name>
    <name type="common">Mouse-ear cress</name>
    <dbReference type="NCBI Taxonomy" id="3702"/>
    <lineage>
        <taxon>Eukaryota</taxon>
        <taxon>Viridiplantae</taxon>
        <taxon>Streptophyta</taxon>
        <taxon>Embryophyta</taxon>
        <taxon>Tracheophyta</taxon>
        <taxon>Spermatophyta</taxon>
        <taxon>Magnoliopsida</taxon>
        <taxon>eudicotyledons</taxon>
        <taxon>Gunneridae</taxon>
        <taxon>Pentapetalae</taxon>
        <taxon>rosids</taxon>
        <taxon>malvids</taxon>
        <taxon>Brassicales</taxon>
        <taxon>Brassicaceae</taxon>
        <taxon>Camelineae</taxon>
        <taxon>Arabidopsis</taxon>
    </lineage>
</organism>
<evidence type="ECO:0000255" key="1"/>
<evidence type="ECO:0000256" key="2">
    <source>
        <dbReference type="SAM" id="MobiDB-lite"/>
    </source>
</evidence>
<evidence type="ECO:0000269" key="3">
    <source>
    </source>
</evidence>
<evidence type="ECO:0000269" key="4">
    <source>
    </source>
</evidence>
<evidence type="ECO:0000269" key="5">
    <source>
    </source>
</evidence>
<evidence type="ECO:0000269" key="6">
    <source>
    </source>
</evidence>
<evidence type="ECO:0000269" key="7">
    <source>
    </source>
</evidence>
<evidence type="ECO:0000269" key="8">
    <source>
    </source>
</evidence>
<evidence type="ECO:0000269" key="9">
    <source>
    </source>
</evidence>
<evidence type="ECO:0000269" key="10">
    <source>
    </source>
</evidence>
<evidence type="ECO:0000269" key="11">
    <source>
    </source>
</evidence>
<evidence type="ECO:0000269" key="12">
    <source>
    </source>
</evidence>
<evidence type="ECO:0000269" key="13">
    <source>
    </source>
</evidence>
<evidence type="ECO:0000305" key="14"/>
<reference key="1">
    <citation type="journal article" date="2003" name="Nature">
        <title>Regulation of flowering time by light quality.</title>
        <authorList>
            <person name="Cerdan P.D."/>
            <person name="Chory J."/>
        </authorList>
    </citation>
    <scope>NUCLEOTIDE SEQUENCE [MRNA] (ISOFORM 1)</scope>
    <scope>FUNCTION</scope>
    <scope>DISRUPTION PHENOTYPE</scope>
    <scope>SUBCELLULAR LOCATION</scope>
</reference>
<reference key="2">
    <citation type="journal article" date="2000" name="Nature">
        <title>Sequence and analysis of chromosome 1 of the plant Arabidopsis thaliana.</title>
        <authorList>
            <person name="Theologis A."/>
            <person name="Ecker J.R."/>
            <person name="Palm C.J."/>
            <person name="Federspiel N.A."/>
            <person name="Kaul S."/>
            <person name="White O."/>
            <person name="Alonso J."/>
            <person name="Altafi H."/>
            <person name="Araujo R."/>
            <person name="Bowman C.L."/>
            <person name="Brooks S.Y."/>
            <person name="Buehler E."/>
            <person name="Chan A."/>
            <person name="Chao Q."/>
            <person name="Chen H."/>
            <person name="Cheuk R.F."/>
            <person name="Chin C.W."/>
            <person name="Chung M.K."/>
            <person name="Conn L."/>
            <person name="Conway A.B."/>
            <person name="Conway A.R."/>
            <person name="Creasy T.H."/>
            <person name="Dewar K."/>
            <person name="Dunn P."/>
            <person name="Etgu P."/>
            <person name="Feldblyum T.V."/>
            <person name="Feng J.-D."/>
            <person name="Fong B."/>
            <person name="Fujii C.Y."/>
            <person name="Gill J.E."/>
            <person name="Goldsmith A.D."/>
            <person name="Haas B."/>
            <person name="Hansen N.F."/>
            <person name="Hughes B."/>
            <person name="Huizar L."/>
            <person name="Hunter J.L."/>
            <person name="Jenkins J."/>
            <person name="Johnson-Hopson C."/>
            <person name="Khan S."/>
            <person name="Khaykin E."/>
            <person name="Kim C.J."/>
            <person name="Koo H.L."/>
            <person name="Kremenetskaia I."/>
            <person name="Kurtz D.B."/>
            <person name="Kwan A."/>
            <person name="Lam B."/>
            <person name="Langin-Hooper S."/>
            <person name="Lee A."/>
            <person name="Lee J.M."/>
            <person name="Lenz C.A."/>
            <person name="Li J.H."/>
            <person name="Li Y.-P."/>
            <person name="Lin X."/>
            <person name="Liu S.X."/>
            <person name="Liu Z.A."/>
            <person name="Luros J.S."/>
            <person name="Maiti R."/>
            <person name="Marziali A."/>
            <person name="Militscher J."/>
            <person name="Miranda M."/>
            <person name="Nguyen M."/>
            <person name="Nierman W.C."/>
            <person name="Osborne B.I."/>
            <person name="Pai G."/>
            <person name="Peterson J."/>
            <person name="Pham P.K."/>
            <person name="Rizzo M."/>
            <person name="Rooney T."/>
            <person name="Rowley D."/>
            <person name="Sakano H."/>
            <person name="Salzberg S.L."/>
            <person name="Schwartz J.R."/>
            <person name="Shinn P."/>
            <person name="Southwick A.M."/>
            <person name="Sun H."/>
            <person name="Tallon L.J."/>
            <person name="Tambunga G."/>
            <person name="Toriumi M.J."/>
            <person name="Town C.D."/>
            <person name="Utterback T."/>
            <person name="Van Aken S."/>
            <person name="Vaysberg M."/>
            <person name="Vysotskaia V.S."/>
            <person name="Walker M."/>
            <person name="Wu D."/>
            <person name="Yu G."/>
            <person name="Fraser C.M."/>
            <person name="Venter J.C."/>
            <person name="Davis R.W."/>
        </authorList>
    </citation>
    <scope>NUCLEOTIDE SEQUENCE [LARGE SCALE GENOMIC DNA]</scope>
    <source>
        <strain>cv. Columbia</strain>
    </source>
</reference>
<reference key="3">
    <citation type="journal article" date="2017" name="Plant J.">
        <title>Araport11: a complete reannotation of the Arabidopsis thaliana reference genome.</title>
        <authorList>
            <person name="Cheng C.Y."/>
            <person name="Krishnakumar V."/>
            <person name="Chan A.P."/>
            <person name="Thibaud-Nissen F."/>
            <person name="Schobel S."/>
            <person name="Town C.D."/>
        </authorList>
    </citation>
    <scope>GENOME REANNOTATION</scope>
    <source>
        <strain>cv. Columbia</strain>
    </source>
</reference>
<reference key="4">
    <citation type="journal article" date="2005" name="Plant Physiol.">
        <title>Repressor- and activator-type ethylene response factors functioning in jasmonate signaling and disease resistance identified via a genome-wide screen of Arabidopsis transcription factor gene expression.</title>
        <authorList>
            <person name="McGrath K.C."/>
            <person name="Dombrecht B."/>
            <person name="Manners J.M."/>
            <person name="Schenk P.M."/>
            <person name="Edgar C.I."/>
            <person name="Maclean D.J."/>
            <person name="Scheible W.R."/>
            <person name="Udvardi M.K."/>
            <person name="Kazan K."/>
        </authorList>
    </citation>
    <scope>INDUCTION BY METHYL JASMONATE AND FUNGAL PATHOGEN</scope>
</reference>
<reference key="5">
    <citation type="journal article" date="2007" name="Mol. Cell">
        <title>Purification of a plant mediator from Arabidopsis thaliana identifies PFT1 as the Med25 subunit.</title>
        <authorList>
            <person name="Baeckstroem S."/>
            <person name="Elfving N."/>
            <person name="Nilsson R."/>
            <person name="Wingsle G."/>
            <person name="Bjoerklund S."/>
        </authorList>
    </citation>
    <scope>FUNCTION</scope>
    <scope>IDENTIFICATION BY MASS SPECTROMETRY</scope>
    <scope>IDENTIFICATION IN THE MEDIATOR COMPLEX</scope>
    <scope>NOMENCLATURE</scope>
</reference>
<reference key="6">
    <citation type="journal article" date="2008" name="Plant Physiol.">
        <title>Acceleration of flowering during shade avoidance in Arabidopsis alters the balance between FLOWERING LOCUS C-mediated repression and photoperiodic induction of flowering.</title>
        <authorList>
            <person name="Wollenberg A.C."/>
            <person name="Strasser B."/>
            <person name="Cerdan P.D."/>
            <person name="Amasino R.M."/>
        </authorList>
    </citation>
    <scope>FUNCTION</scope>
</reference>
<reference key="7">
    <citation type="journal article" date="2009" name="Plant Cell">
        <title>The mediator complex subunit PFT1 is a key regulator of jasmonate-dependent defense in Arabidopsis.</title>
        <authorList>
            <person name="Kidd B.N."/>
            <person name="Edgar C.I."/>
            <person name="Kumar K.K."/>
            <person name="Aitken E.A."/>
            <person name="Schenk P.M."/>
            <person name="Manners J.M."/>
            <person name="Kazan K."/>
        </authorList>
    </citation>
    <scope>FUNCTION</scope>
    <scope>DISRUPTION PHENOTYPE</scope>
</reference>
<reference key="8">
    <citation type="journal article" date="2011" name="Mol. Plant">
        <title>A high-throughput screening system for Arabidopsis transcription factors and its application to Med25-dependent transcriptional regulation.</title>
        <authorList>
            <person name="Ou B."/>
            <person name="Yin K.Q."/>
            <person name="Liu S.N."/>
            <person name="Yang Y."/>
            <person name="Gu T."/>
            <person name="Wing Hui J.M."/>
            <person name="Zhang L."/>
            <person name="Miao J."/>
            <person name="Kondou Y."/>
            <person name="Matsui M."/>
            <person name="Gu H.Y."/>
            <person name="Qu L.J."/>
        </authorList>
    </citation>
    <scope>INTERACTION WITH BBX20; PHL1; RAP2-2; ERF1B; ERF091; ERF095; ERF098 AND ERF109</scope>
</reference>
<reference key="9">
    <citation type="journal article" date="2011" name="Plant Physiol.">
        <title>The Mediator complex in plants: structure, phylogeny, and expression profiling of representative genes in a dicot (Arabidopsis) and a monocot (rice) during reproduction and abiotic stress.</title>
        <authorList>
            <person name="Mathur S."/>
            <person name="Vyas S."/>
            <person name="Kapoor S."/>
            <person name="Tyagi A.K."/>
        </authorList>
    </citation>
    <scope>IDENTIFICATION</scope>
    <scope>NOMENCLATURE</scope>
</reference>
<reference key="10">
    <citation type="journal article" date="2011" name="Proc. Natl. Acad. Sci. U.S.A.">
        <title>The Arabidopsis thaliana Med25 mediator subunit integrates environmental cues to control plant development.</title>
        <authorList>
            <person name="Elfving N."/>
            <person name="Davoine C."/>
            <person name="Benlloch R."/>
            <person name="Blomberg J."/>
            <person name="Braennstroem K."/>
            <person name="Mueller D."/>
            <person name="Nilsson A."/>
            <person name="Ulfstedt M."/>
            <person name="Ronne H."/>
            <person name="Wingsle G."/>
            <person name="Nilsson O."/>
            <person name="Bjoerklund S."/>
        </authorList>
    </citation>
    <scope>FUNCTION</scope>
    <scope>INTERACTION WITH HB29; PHL1 AND DREB2A</scope>
    <scope>DISRUPTION PHENOTYPE</scope>
</reference>
<reference key="11">
    <citation type="journal article" date="2012" name="Plant J.">
        <title>PFT1, the MED25 subunit of the plant Mediator complex, promotes flowering through CONSTANS dependent and independent mechanisms in Arabidopsis.</title>
        <authorList>
            <person name="Inigo S."/>
            <person name="Alvarez M.J."/>
            <person name="Strasser B."/>
            <person name="Califano A."/>
            <person name="Cerdan P.D."/>
        </authorList>
    </citation>
    <scope>FUNCTION</scope>
</reference>
<reference key="12">
    <citation type="journal article" date="2012" name="Nucleic Acids Res.">
        <title>Interactions between DNA, transcriptional regulator Dreb2a and the Med25 mediator subunit from Arabidopsis thaliana involve conformational changes.</title>
        <authorList>
            <person name="Blomberg J."/>
            <person name="Aguilar X."/>
            <person name="Braennstroem K."/>
            <person name="Rautio L."/>
            <person name="Olofsson A."/>
            <person name="Wittung-Stafshede P."/>
            <person name="Bjoerklund S."/>
        </authorList>
    </citation>
    <scope>INTERACTION WITH DREB2A</scope>
</reference>
<reference key="13">
    <citation type="journal article" date="2012" name="Plant Cell">
        <title>The Arabidopsis mediator subunit MED25 differentially regulates jasmonate and abscisic acid signaling through interacting with the MYC2 and ABI5 transcription factors.</title>
        <authorList>
            <person name="Chen R."/>
            <person name="Jiang H."/>
            <person name="Li L."/>
            <person name="Zhai Q."/>
            <person name="Qi L."/>
            <person name="Zhou W."/>
            <person name="Liu X."/>
            <person name="Li H."/>
            <person name="Zheng W."/>
            <person name="Sun J."/>
            <person name="Li C."/>
        </authorList>
    </citation>
    <scope>INTERACTION WITH ABI5 AND MYC2</scope>
</reference>
<reference key="14">
    <citation type="journal article" date="2012" name="Plant Physiol.">
        <title>Proteasome-mediated turnover of Arabidopsis MED25 is coupled to the activation of FLOWERING LOCUS T transcription.</title>
        <authorList>
            <person name="Inigo S."/>
            <person name="Giraldez A.N."/>
            <person name="Chory J."/>
            <person name="Cerdan P.D."/>
        </authorList>
    </citation>
    <scope>INTERACTION WITH MBR1 AND MBR2</scope>
</reference>
<proteinExistence type="evidence at protein level"/>
<gene>
    <name type="primary">MED25</name>
    <name type="synonym">MED25_1</name>
    <name type="synonym">PFT1</name>
    <name type="ordered locus">At1g25540</name>
    <name type="ORF">F2J7.4</name>
</gene>
<feature type="chain" id="PRO_0000418124" description="Mediator of RNA polymerase II transcription subunit 25">
    <location>
        <begin position="1"/>
        <end position="836"/>
    </location>
</feature>
<feature type="region of interest" description="Disordered" evidence="2">
    <location>
        <begin position="260"/>
        <end position="285"/>
    </location>
</feature>
<feature type="region of interest" description="Disordered" evidence="2">
    <location>
        <begin position="435"/>
        <end position="466"/>
    </location>
</feature>
<feature type="region of interest" description="Disordered" evidence="2">
    <location>
        <begin position="518"/>
        <end position="547"/>
    </location>
</feature>
<feature type="region of interest" description="Disordered" evidence="2">
    <location>
        <begin position="731"/>
        <end position="836"/>
    </location>
</feature>
<feature type="coiled-coil region" evidence="1">
    <location>
        <begin position="680"/>
        <end position="761"/>
    </location>
</feature>
<feature type="compositionally biased region" description="Polar residues" evidence="2">
    <location>
        <begin position="271"/>
        <end position="282"/>
    </location>
</feature>
<feature type="compositionally biased region" description="Polar residues" evidence="2">
    <location>
        <begin position="442"/>
        <end position="466"/>
    </location>
</feature>
<feature type="compositionally biased region" description="Low complexity" evidence="2">
    <location>
        <begin position="731"/>
        <end position="818"/>
    </location>
</feature>
<feature type="compositionally biased region" description="Low complexity" evidence="2">
    <location>
        <begin position="827"/>
        <end position="836"/>
    </location>
</feature>
<feature type="splice variant" id="VSP_043993" description="In isoform 2." evidence="14">
    <location>
        <begin position="1"/>
        <end position="109"/>
    </location>
</feature>
<comment type="function">
    <text evidence="3 5 6 7 9 10">Component of the Mediator complex, a coactivator involved in the regulated transcription of nearly all RNA polymerase II-dependent genes. Mediator functions as a bridge to convey information from gene-specific regulatory proteins to the basal RNA polymerase II transcription machinery. Mediator is recruited to promoters by direct interactions with regulatory proteins and serves as a scaffold for the assembly of a functional preinitiation complex with RNA polymerase II and the general transcription factors. Positive regulator of shade avoidance and of jasmonate signaling. Acts in repression of PhyB-mediated light signaling and regulates the expression of FLOWERING LOCUS T (FT) and of CONSTANS (CO).</text>
</comment>
<comment type="subunit">
    <text evidence="5 8 9 11 12 13">Component of the Mediator complex. Interacts with the transcription factors BBX20, RAP2-2, ERF1B, ERF091, ERF095, ERF098, ERF109, HB29, PHL1, DREB2A, ABI5 and MYC2. Interacts with the E3 ubiquitin-protein ligases MBR1 and MBR2.</text>
</comment>
<comment type="interaction">
    <interactant intactId="EBI-1386292">
        <id>Q7XYY2</id>
    </interactant>
    <interactant intactId="EBI-7489933">
        <id>P06492</id>
        <label>UL48</label>
    </interactant>
    <organismsDiffer>true</organismsDiffer>
    <experiments>2</experiments>
</comment>
<comment type="interaction">
    <interactant intactId="EBI-15924435">
        <id>Q7XYY2-1</id>
    </interactant>
    <interactant intactId="EBI-1786840">
        <id>O82132</id>
        <label>DREB2A</label>
    </interactant>
    <organismsDiffer>false</organismsDiffer>
    <experiments>3</experiments>
</comment>
<comment type="interaction">
    <interactant intactId="EBI-15924435">
        <id>Q7XYY2-1</id>
    </interactant>
    <interactant intactId="EBI-15845995">
        <id>Q9FIP9</id>
        <label>MYC3</label>
    </interactant>
    <organismsDiffer>false</organismsDiffer>
    <experiments>2</experiments>
</comment>
<comment type="interaction">
    <interactant intactId="EBI-15924435">
        <id>Q7XYY2-1</id>
    </interactant>
    <interactant intactId="EBI-15924466">
        <id>Q8GUN5-2</id>
        <label>PHL1</label>
    </interactant>
    <organismsDiffer>false</organismsDiffer>
    <experiments>2</experiments>
</comment>
<comment type="interaction">
    <interactant intactId="EBI-15924435">
        <id>Q7XYY2-1</id>
    </interactant>
    <interactant intactId="EBI-1806317">
        <id>Q9SEZ1</id>
        <label>ZHD11</label>
    </interactant>
    <organismsDiffer>false</organismsDiffer>
    <experiments>3</experiments>
</comment>
<comment type="subcellular location">
    <subcellularLocation>
        <location evidence="3">Nucleus</location>
    </subcellularLocation>
</comment>
<comment type="alternative products">
    <event type="alternative splicing"/>
    <isoform>
        <id>Q7XYY2-1</id>
        <name>1</name>
        <sequence type="displayed"/>
    </isoform>
    <isoform>
        <id>Q7XYY2-2</id>
        <name>2</name>
        <sequence type="described" ref="VSP_043993"/>
    </isoform>
</comment>
<comment type="induction">
    <text evidence="4">Down-regulated by methyl jasmonate and by infection with an incompatible isolate of a necrotrophic fungal pathogen.</text>
</comment>
<comment type="disruption phenotype">
    <text evidence="3 7 9">Late-flowering phenotype when grown under long-day conditions. Increased drought tolerance and sensitivity to necrotrophic pathogens. Increased resistance to hemibiotrophic fungal pathogen F.oxysporum.</text>
</comment>
<comment type="miscellaneous">
    <text>The affinity between DREB2A and MED25 is reduced when DREB2A is pre-bound to DNA.</text>
</comment>
<comment type="similarity">
    <text evidence="14">Belongs to the Mediator complex subunit 25 family.</text>
</comment>
<comment type="sequence caution" evidence="14">
    <conflict type="erroneous gene model prediction">
        <sequence resource="EMBL-CDS" id="AAG50810"/>
    </conflict>
</comment>
<sequence length="836" mass="89566">MSSEVKQLIVVAEGTAALGPYWQTIVSDYLEKIIRSFCGSELNGERNPVSTVELSLVIFNSHGSYCACLVQRSGWTRDVDIFLHWLSSIQFGGGGFNEVATAEGLAEALMMFSPPSGQAQPSNDLKRHCILITASNPHILPTPVYRPRLQNVERNENGDAQAESRLSDAETVASYFAKCSVSLSVVCPKQLPTIRALYNAGKPNQQSADLSIDTAKNTFYLVLISENFVEACAALSHSATNLPQTQSPVKVDRATVAPSIPVTGQPPAPVSSANGPIQNRQPVSVGPVPTATVKVEPSTVTSMAPVPSFPHIPAVARPATQAIPSIQTSSASPVSQDMVSNAENAPDIKPVVVSGMTPPLRTGPPGGANVNLLNNLSQVRQVMSSAALAGAASSVGQSAVAMHMSNMISTGMATSLPPSQTVFSTGQQGITSMAGSGALMGSAQTGQSPGPNNAFSPQTTSNVASNLGVSQPMQGMNQGSHSGAMMQGGISMNQNMMSGLGQGNVSSGTGGMMPTPGVGQQAQSGIQQLGGSNSSAPNMQLSQPSSGAMQTSQSKYVKVWEGNLSGQRQGQPVLITRLEGYRSASASDSLAANWPPTMQIVRLISQDHMNNKQYVGKADFLVFRAMSQHGFLGQLQDKKLCAVIQLPSQTLLLSVSDKACRLIGMLFPGDMVVFKPQIPNQQQQQQQQLHQQQQQQQQIQQQQQQQQHLQQQQMPQLQQQQQQHQQQQQQQHQLSQLQHHQQQQQQQQQQQQQHQLTQLQHHHQQQQQASPLNQMQQQTSPLNQMQQQTSPLNQMQQQQQPQQMVMGGQAFAQAPGRSQQGGGGGQPNMPGAGFMG</sequence>
<accession>Q7XYY2</accession>
<accession>F4ICJ2</accession>
<accession>Q9C6M3</accession>